<proteinExistence type="inferred from homology"/>
<comment type="catalytic activity">
    <reaction>
        <text>pyruvate + ATP = phosphoenolpyruvate + ADP + H(+)</text>
        <dbReference type="Rhea" id="RHEA:18157"/>
        <dbReference type="ChEBI" id="CHEBI:15361"/>
        <dbReference type="ChEBI" id="CHEBI:15378"/>
        <dbReference type="ChEBI" id="CHEBI:30616"/>
        <dbReference type="ChEBI" id="CHEBI:58702"/>
        <dbReference type="ChEBI" id="CHEBI:456216"/>
        <dbReference type="EC" id="2.7.1.40"/>
    </reaction>
</comment>
<comment type="cofactor">
    <cofactor evidence="1">
        <name>Mg(2+)</name>
        <dbReference type="ChEBI" id="CHEBI:18420"/>
    </cofactor>
</comment>
<comment type="cofactor">
    <cofactor evidence="1">
        <name>K(+)</name>
        <dbReference type="ChEBI" id="CHEBI:29103"/>
    </cofactor>
</comment>
<comment type="pathway">
    <text>Carbohydrate degradation; glycolysis; pyruvate from D-glyceraldehyde 3-phosphate: step 5/5.</text>
</comment>
<comment type="similarity">
    <text evidence="3">Belongs to the pyruvate kinase family.</text>
</comment>
<comment type="similarity">
    <text evidence="3">In the C-terminal section; belongs to the PEP-utilizing enzyme family.</text>
</comment>
<protein>
    <recommendedName>
        <fullName>Pyruvate kinase</fullName>
        <shortName>PK</shortName>
        <ecNumber>2.7.1.40</ecNumber>
    </recommendedName>
</protein>
<gene>
    <name type="primary">pyk</name>
    <name type="ordered locus">SAS1625</name>
</gene>
<evidence type="ECO:0000250" key="1"/>
<evidence type="ECO:0000250" key="2">
    <source>
        <dbReference type="UniProtKB" id="P14618"/>
    </source>
</evidence>
<evidence type="ECO:0000305" key="3"/>
<keyword id="KW-0067">ATP-binding</keyword>
<keyword id="KW-0324">Glycolysis</keyword>
<keyword id="KW-0418">Kinase</keyword>
<keyword id="KW-0460">Magnesium</keyword>
<keyword id="KW-0479">Metal-binding</keyword>
<keyword id="KW-0547">Nucleotide-binding</keyword>
<keyword id="KW-0630">Potassium</keyword>
<keyword id="KW-0670">Pyruvate</keyword>
<keyword id="KW-0808">Transferase</keyword>
<dbReference type="EC" id="2.7.1.40"/>
<dbReference type="EMBL" id="BX571857">
    <property type="protein sequence ID" value="CAG43427.1"/>
    <property type="molecule type" value="Genomic_DNA"/>
</dbReference>
<dbReference type="RefSeq" id="WP_001232648.1">
    <property type="nucleotide sequence ID" value="NC_002953.3"/>
</dbReference>
<dbReference type="SMR" id="Q6G8M9"/>
<dbReference type="KEGG" id="sas:SAS1625"/>
<dbReference type="HOGENOM" id="CLU_015439_0_2_9"/>
<dbReference type="UniPathway" id="UPA00109">
    <property type="reaction ID" value="UER00188"/>
</dbReference>
<dbReference type="GO" id="GO:0005524">
    <property type="term" value="F:ATP binding"/>
    <property type="evidence" value="ECO:0007669"/>
    <property type="project" value="UniProtKB-KW"/>
</dbReference>
<dbReference type="GO" id="GO:0016301">
    <property type="term" value="F:kinase activity"/>
    <property type="evidence" value="ECO:0007669"/>
    <property type="project" value="UniProtKB-KW"/>
</dbReference>
<dbReference type="GO" id="GO:0000287">
    <property type="term" value="F:magnesium ion binding"/>
    <property type="evidence" value="ECO:0007669"/>
    <property type="project" value="InterPro"/>
</dbReference>
<dbReference type="GO" id="GO:0030955">
    <property type="term" value="F:potassium ion binding"/>
    <property type="evidence" value="ECO:0007669"/>
    <property type="project" value="InterPro"/>
</dbReference>
<dbReference type="GO" id="GO:0004743">
    <property type="term" value="F:pyruvate kinase activity"/>
    <property type="evidence" value="ECO:0007669"/>
    <property type="project" value="UniProtKB-EC"/>
</dbReference>
<dbReference type="FunFam" id="2.40.33.10:FF:000001">
    <property type="entry name" value="Pyruvate kinase"/>
    <property type="match status" value="1"/>
</dbReference>
<dbReference type="FunFam" id="3.20.20.60:FF:000001">
    <property type="entry name" value="Pyruvate kinase"/>
    <property type="match status" value="1"/>
</dbReference>
<dbReference type="FunFam" id="3.40.1380.20:FF:000017">
    <property type="entry name" value="Pyruvate kinase"/>
    <property type="match status" value="1"/>
</dbReference>
<dbReference type="Gene3D" id="3.20.20.60">
    <property type="entry name" value="Phosphoenolpyruvate-binding domains"/>
    <property type="match status" value="1"/>
</dbReference>
<dbReference type="Gene3D" id="3.50.30.10">
    <property type="entry name" value="Phosphohistidine domain"/>
    <property type="match status" value="1"/>
</dbReference>
<dbReference type="Gene3D" id="2.40.33.10">
    <property type="entry name" value="PK beta-barrel domain-like"/>
    <property type="match status" value="1"/>
</dbReference>
<dbReference type="Gene3D" id="3.40.1380.20">
    <property type="entry name" value="Pyruvate kinase, C-terminal domain"/>
    <property type="match status" value="1"/>
</dbReference>
<dbReference type="InterPro" id="IPR008279">
    <property type="entry name" value="PEP-util_enz_mobile_dom"/>
</dbReference>
<dbReference type="InterPro" id="IPR036637">
    <property type="entry name" value="Phosphohistidine_dom_sf"/>
</dbReference>
<dbReference type="InterPro" id="IPR001697">
    <property type="entry name" value="Pyr_Knase"/>
</dbReference>
<dbReference type="InterPro" id="IPR015813">
    <property type="entry name" value="Pyrv/PenolPyrv_kinase-like_dom"/>
</dbReference>
<dbReference type="InterPro" id="IPR040442">
    <property type="entry name" value="Pyrv_kinase-like_dom_sf"/>
</dbReference>
<dbReference type="InterPro" id="IPR011037">
    <property type="entry name" value="Pyrv_Knase-like_insert_dom_sf"/>
</dbReference>
<dbReference type="InterPro" id="IPR015793">
    <property type="entry name" value="Pyrv_Knase_brl"/>
</dbReference>
<dbReference type="InterPro" id="IPR015795">
    <property type="entry name" value="Pyrv_Knase_C"/>
</dbReference>
<dbReference type="InterPro" id="IPR036918">
    <property type="entry name" value="Pyrv_Knase_C_sf"/>
</dbReference>
<dbReference type="InterPro" id="IPR015806">
    <property type="entry name" value="Pyrv_Knase_insert_dom_sf"/>
</dbReference>
<dbReference type="NCBIfam" id="NF004491">
    <property type="entry name" value="PRK05826.1"/>
    <property type="match status" value="1"/>
</dbReference>
<dbReference type="NCBIfam" id="NF004978">
    <property type="entry name" value="PRK06354.1"/>
    <property type="match status" value="1"/>
</dbReference>
<dbReference type="NCBIfam" id="TIGR01064">
    <property type="entry name" value="pyruv_kin"/>
    <property type="match status" value="1"/>
</dbReference>
<dbReference type="PANTHER" id="PTHR11817">
    <property type="entry name" value="PYRUVATE KINASE"/>
    <property type="match status" value="1"/>
</dbReference>
<dbReference type="Pfam" id="PF00391">
    <property type="entry name" value="PEP-utilizers"/>
    <property type="match status" value="1"/>
</dbReference>
<dbReference type="Pfam" id="PF00224">
    <property type="entry name" value="PK"/>
    <property type="match status" value="1"/>
</dbReference>
<dbReference type="Pfam" id="PF02887">
    <property type="entry name" value="PK_C"/>
    <property type="match status" value="1"/>
</dbReference>
<dbReference type="PRINTS" id="PR01050">
    <property type="entry name" value="PYRUVTKNASE"/>
</dbReference>
<dbReference type="SUPFAM" id="SSF51621">
    <property type="entry name" value="Phosphoenolpyruvate/pyruvate domain"/>
    <property type="match status" value="1"/>
</dbReference>
<dbReference type="SUPFAM" id="SSF52009">
    <property type="entry name" value="Phosphohistidine domain"/>
    <property type="match status" value="1"/>
</dbReference>
<dbReference type="SUPFAM" id="SSF50800">
    <property type="entry name" value="PK beta-barrel domain-like"/>
    <property type="match status" value="1"/>
</dbReference>
<dbReference type="SUPFAM" id="SSF52935">
    <property type="entry name" value="PK C-terminal domain-like"/>
    <property type="match status" value="1"/>
</dbReference>
<accession>Q6G8M9</accession>
<organism>
    <name type="scientific">Staphylococcus aureus (strain MSSA476)</name>
    <dbReference type="NCBI Taxonomy" id="282459"/>
    <lineage>
        <taxon>Bacteria</taxon>
        <taxon>Bacillati</taxon>
        <taxon>Bacillota</taxon>
        <taxon>Bacilli</taxon>
        <taxon>Bacillales</taxon>
        <taxon>Staphylococcaceae</taxon>
        <taxon>Staphylococcus</taxon>
    </lineage>
</organism>
<name>KPYK_STAAS</name>
<reference key="1">
    <citation type="journal article" date="2004" name="Proc. Natl. Acad. Sci. U.S.A.">
        <title>Complete genomes of two clinical Staphylococcus aureus strains: evidence for the rapid evolution of virulence and drug resistance.</title>
        <authorList>
            <person name="Holden M.T.G."/>
            <person name="Feil E.J."/>
            <person name="Lindsay J.A."/>
            <person name="Peacock S.J."/>
            <person name="Day N.P.J."/>
            <person name="Enright M.C."/>
            <person name="Foster T.J."/>
            <person name="Moore C.E."/>
            <person name="Hurst L."/>
            <person name="Atkin R."/>
            <person name="Barron A."/>
            <person name="Bason N."/>
            <person name="Bentley S.D."/>
            <person name="Chillingworth C."/>
            <person name="Chillingworth T."/>
            <person name="Churcher C."/>
            <person name="Clark L."/>
            <person name="Corton C."/>
            <person name="Cronin A."/>
            <person name="Doggett J."/>
            <person name="Dowd L."/>
            <person name="Feltwell T."/>
            <person name="Hance Z."/>
            <person name="Harris B."/>
            <person name="Hauser H."/>
            <person name="Holroyd S."/>
            <person name="Jagels K."/>
            <person name="James K.D."/>
            <person name="Lennard N."/>
            <person name="Line A."/>
            <person name="Mayes R."/>
            <person name="Moule S."/>
            <person name="Mungall K."/>
            <person name="Ormond D."/>
            <person name="Quail M.A."/>
            <person name="Rabbinowitsch E."/>
            <person name="Rutherford K.M."/>
            <person name="Sanders M."/>
            <person name="Sharp S."/>
            <person name="Simmonds M."/>
            <person name="Stevens K."/>
            <person name="Whitehead S."/>
            <person name="Barrell B.G."/>
            <person name="Spratt B.G."/>
            <person name="Parkhill J."/>
        </authorList>
    </citation>
    <scope>NUCLEOTIDE SEQUENCE [LARGE SCALE GENOMIC DNA]</scope>
    <source>
        <strain>MSSA476</strain>
    </source>
</reference>
<feature type="chain" id="PRO_0000294131" description="Pyruvate kinase">
    <location>
        <begin position="1"/>
        <end position="585"/>
    </location>
</feature>
<feature type="binding site" evidence="1">
    <location>
        <position position="32"/>
    </location>
    <ligand>
        <name>substrate</name>
    </ligand>
</feature>
<feature type="binding site" evidence="2">
    <location>
        <begin position="34"/>
        <end position="37"/>
    </location>
    <ligand>
        <name>ATP</name>
        <dbReference type="ChEBI" id="CHEBI:30616"/>
    </ligand>
</feature>
<feature type="binding site" evidence="1">
    <location>
        <position position="34"/>
    </location>
    <ligand>
        <name>K(+)</name>
        <dbReference type="ChEBI" id="CHEBI:29103"/>
    </ligand>
</feature>
<feature type="binding site" evidence="1">
    <location>
        <position position="36"/>
    </location>
    <ligand>
        <name>K(+)</name>
        <dbReference type="ChEBI" id="CHEBI:29103"/>
    </ligand>
</feature>
<feature type="binding site" evidence="1">
    <location>
        <position position="66"/>
    </location>
    <ligand>
        <name>K(+)</name>
        <dbReference type="ChEBI" id="CHEBI:29103"/>
    </ligand>
</feature>
<feature type="binding site" evidence="1">
    <location>
        <position position="67"/>
    </location>
    <ligand>
        <name>K(+)</name>
        <dbReference type="ChEBI" id="CHEBI:29103"/>
    </ligand>
</feature>
<feature type="binding site" evidence="2">
    <location>
        <position position="73"/>
    </location>
    <ligand>
        <name>ATP</name>
        <dbReference type="ChEBI" id="CHEBI:30616"/>
    </ligand>
</feature>
<feature type="binding site" evidence="2">
    <location>
        <position position="156"/>
    </location>
    <ligand>
        <name>ATP</name>
        <dbReference type="ChEBI" id="CHEBI:30616"/>
    </ligand>
</feature>
<feature type="binding site" evidence="1">
    <location>
        <position position="221"/>
    </location>
    <ligand>
        <name>Mg(2+)</name>
        <dbReference type="ChEBI" id="CHEBI:18420"/>
    </ligand>
</feature>
<feature type="binding site" evidence="1">
    <location>
        <position position="244"/>
    </location>
    <ligand>
        <name>substrate</name>
    </ligand>
</feature>
<feature type="binding site" evidence="1">
    <location>
        <position position="245"/>
    </location>
    <ligand>
        <name>Mg(2+)</name>
        <dbReference type="ChEBI" id="CHEBI:18420"/>
    </ligand>
</feature>
<feature type="binding site" evidence="1">
    <location>
        <position position="245"/>
    </location>
    <ligand>
        <name>substrate</name>
    </ligand>
</feature>
<feature type="binding site" evidence="1">
    <location>
        <position position="277"/>
    </location>
    <ligand>
        <name>substrate</name>
    </ligand>
</feature>
<feature type="site" description="Transition state stabilizer" evidence="1">
    <location>
        <position position="219"/>
    </location>
</feature>
<sequence>MRKTKIVCTIGPASESEEMIEKLINAGMNVARLNFSHGSHEEHKGRIDTIRKVAKRLDKIVAILLDTKGPEIRTHNMKDGIIELERGNEVIVSMNEVEGTPEKFSVTYENLINDVQVGSYILLDDGLIELQVKDIDHAKKEVKCDILNSGELKNKKGVNLPGVRVSLPGITEKDAEDIRFGIKENVDFIAASFVRRPSDVLEIREILEEQKANISVFPKIENQEGIDNIAEILEVSDGLMVARGDMGVEIPPEKVPMVQKDLIRQCNKLGKPVITATQMLDSMQRNPRATRAEASDVANAIYDGTDAVMLSGETAAGLYPEEAVKTMRNIAVSAEAAQDYKKLLSDRTKLVETSLVNAIGISVAHTALNLNVKAIVAATESGSTARTISKYRPHSDIIAVTPSEETARQCSIVWGVQPVVKKGRKSTDALLNNAVATAVETGRVSNGDLIIITAGVPTGETGTTNMMKIHLVGDEIANGQGIGRGSVVGTTLVAETVKDLEGKDLSDKVIVTNSIDETFVPYVEKALGLITEENGITSPSAIVGLEKGIPTVVGVEKAVKNISNNMLVTIDAAQGKIFEGYANVL</sequence>